<comment type="function">
    <text evidence="2">Involved in a binding protein-dependent transport system responsible for the uptake of melibiose, raffinose and isomaltotriose.</text>
</comment>
<comment type="subcellular location">
    <subcellularLocation>
        <location evidence="1">Cell membrane</location>
        <topology evidence="1">Lipid-anchor</topology>
    </subcellularLocation>
</comment>
<comment type="induction">
    <text evidence="2">By raffinose.</text>
</comment>
<comment type="similarity">
    <text evidence="4">Belongs to the bacterial solute-binding protein 1 family.</text>
</comment>
<keyword id="KW-1003">Cell membrane</keyword>
<keyword id="KW-0449">Lipoprotein</keyword>
<keyword id="KW-0472">Membrane</keyword>
<keyword id="KW-0564">Palmitate</keyword>
<keyword id="KW-1185">Reference proteome</keyword>
<keyword id="KW-0732">Signal</keyword>
<keyword id="KW-0762">Sugar transport</keyword>
<keyword id="KW-0813">Transport</keyword>
<feature type="signal peptide" evidence="1">
    <location>
        <begin position="1"/>
        <end position="22"/>
    </location>
</feature>
<feature type="chain" id="PRO_0000031702" description="Multiple sugar-binding protein">
    <location>
        <begin position="23"/>
        <end position="420"/>
    </location>
</feature>
<feature type="lipid moiety-binding region" description="N-palmitoyl cysteine" evidence="1">
    <location>
        <position position="23"/>
    </location>
</feature>
<feature type="lipid moiety-binding region" description="S-diacylglycerol cysteine" evidence="1">
    <location>
        <position position="23"/>
    </location>
</feature>
<feature type="sequence conflict" description="In Ref. 1; AAA26934." evidence="4" ref="1">
    <original>KA</original>
    <variation>NG</variation>
    <location>
        <begin position="27"/>
        <end position="28"/>
    </location>
</feature>
<feature type="sequence conflict" description="In Ref. 1; AAA26934." evidence="4" ref="1">
    <original>E</original>
    <variation>D</variation>
    <location>
        <position position="33"/>
    </location>
</feature>
<feature type="sequence conflict" description="In Ref. 1; AAA26934." evidence="4" ref="1">
    <original>ALPAIKQQDPK</original>
    <variation>PCQLLNNKIPN</variation>
    <location>
        <begin position="277"/>
        <end position="287"/>
    </location>
</feature>
<feature type="sequence conflict" description="In Ref. 1; AAA26934." evidence="4" ref="1">
    <original>D</original>
    <variation>H</variation>
    <location>
        <position position="372"/>
    </location>
</feature>
<feature type="sequence conflict" description="In Ref. 1; AAA26934." evidence="4" ref="1">
    <original>F</original>
    <variation>L</variation>
    <location>
        <position position="388"/>
    </location>
</feature>
<gene>
    <name evidence="3" type="primary">msmE</name>
    <name type="ordered locus">SMU_878</name>
</gene>
<evidence type="ECO:0000255" key="1">
    <source>
        <dbReference type="PROSITE-ProRule" id="PRU00303"/>
    </source>
</evidence>
<evidence type="ECO:0000269" key="2">
    <source>
    </source>
</evidence>
<evidence type="ECO:0000303" key="3">
    <source>
    </source>
</evidence>
<evidence type="ECO:0000305" key="4"/>
<sequence>MKWYKKIGLLGIVGLTSVLLAACNKSKASQSKEDKVTIEYFNQKKEMDATLKKIIKDFERENPKIHVKMTSVPDAGTVLKTRVLSGDVPDVINIYPQNMDFQEWSKAGYFYNMTGKAYLNHLKNHYANEYKVNQKVYSVPLTANVSGIYYNKTKFKELGLKVPETWDEFVKLVEEIKAKKETPFALAGTEGWTLNGYHQLSLISVTGSANAANKYLRFSQPNSIKTSDKILKEDMVRLNLLADDGNQQKNWKGASYNDALVAFANEKALMTPNGSWALPAIKQQDPKFEIGTFAFPGKKTGNGITVGAGDLALSISAKTKHLKEAEKFVKYMTTARAMQKYYDVDGSPVAVKGVREDKNSPLQPLTKLAFTDKHYVWLGQHWNSEDDFFTATTNYLMTKNAKGLADGLNAFFNPMKADVD</sequence>
<reference key="1">
    <citation type="journal article" date="1992" name="J. Biol. Chem.">
        <title>A binding protein-dependent transport system in Streptococcus mutans responsible for multiple sugar metabolism.</title>
        <authorList>
            <person name="Russell R.R.B."/>
            <person name="Aduse-Opoku J."/>
            <person name="Sutcliffe I.C."/>
            <person name="Tao L."/>
            <person name="Ferretti J.J."/>
        </authorList>
    </citation>
    <scope>NUCLEOTIDE SEQUENCE [GENOMIC DNA]</scope>
    <scope>FUNCTION</scope>
    <scope>INDUCTION</scope>
    <source>
        <strain>Ingbritt</strain>
    </source>
</reference>
<reference key="2">
    <citation type="journal article" date="2002" name="Proc. Natl. Acad. Sci. U.S.A.">
        <title>Genome sequence of Streptococcus mutans UA159, a cariogenic dental pathogen.</title>
        <authorList>
            <person name="Ajdic D.J."/>
            <person name="McShan W.M."/>
            <person name="McLaughlin R.E."/>
            <person name="Savic G."/>
            <person name="Chang J."/>
            <person name="Carson M.B."/>
            <person name="Primeaux C."/>
            <person name="Tian R."/>
            <person name="Kenton S."/>
            <person name="Jia H.G."/>
            <person name="Lin S.P."/>
            <person name="Qian Y."/>
            <person name="Li S."/>
            <person name="Zhu H."/>
            <person name="Najar F.Z."/>
            <person name="Lai H."/>
            <person name="White J."/>
            <person name="Roe B.A."/>
            <person name="Ferretti J.J."/>
        </authorList>
    </citation>
    <scope>NUCLEOTIDE SEQUENCE [LARGE SCALE GENOMIC DNA]</scope>
    <source>
        <strain>ATCC 700610 / UA159</strain>
    </source>
</reference>
<protein>
    <recommendedName>
        <fullName>Multiple sugar-binding protein</fullName>
    </recommendedName>
</protein>
<proteinExistence type="evidence at transcript level"/>
<name>MSME_STRMU</name>
<organism>
    <name type="scientific">Streptococcus mutans serotype c (strain ATCC 700610 / UA159)</name>
    <dbReference type="NCBI Taxonomy" id="210007"/>
    <lineage>
        <taxon>Bacteria</taxon>
        <taxon>Bacillati</taxon>
        <taxon>Bacillota</taxon>
        <taxon>Bacilli</taxon>
        <taxon>Lactobacillales</taxon>
        <taxon>Streptococcaceae</taxon>
        <taxon>Streptococcus</taxon>
    </lineage>
</organism>
<accession>Q00749</accession>
<dbReference type="EMBL" id="M77351">
    <property type="protein sequence ID" value="AAA26934.1"/>
    <property type="molecule type" value="Genomic_DNA"/>
</dbReference>
<dbReference type="EMBL" id="AE014133">
    <property type="protein sequence ID" value="AAN58593.1"/>
    <property type="molecule type" value="Genomic_DNA"/>
</dbReference>
<dbReference type="PIR" id="B42400">
    <property type="entry name" value="B42400"/>
</dbReference>
<dbReference type="RefSeq" id="NP_721287.1">
    <property type="nucleotide sequence ID" value="NC_004350.2"/>
</dbReference>
<dbReference type="RefSeq" id="WP_002262872.1">
    <property type="nucleotide sequence ID" value="NC_004350.2"/>
</dbReference>
<dbReference type="SMR" id="Q00749"/>
<dbReference type="STRING" id="210007.SMU_878"/>
<dbReference type="TCDB" id="3.A.1.1.28">
    <property type="family name" value="the atp-binding cassette (abc) superfamily"/>
</dbReference>
<dbReference type="GeneID" id="93859592"/>
<dbReference type="KEGG" id="smu:SMU_878"/>
<dbReference type="PATRIC" id="fig|210007.7.peg.784"/>
<dbReference type="eggNOG" id="COG1653">
    <property type="taxonomic scope" value="Bacteria"/>
</dbReference>
<dbReference type="HOGENOM" id="CLU_031285_12_3_9"/>
<dbReference type="OrthoDB" id="9798191at2"/>
<dbReference type="PhylomeDB" id="Q00749"/>
<dbReference type="Proteomes" id="UP000002512">
    <property type="component" value="Chromosome"/>
</dbReference>
<dbReference type="GO" id="GO:0005886">
    <property type="term" value="C:plasma membrane"/>
    <property type="evidence" value="ECO:0007669"/>
    <property type="project" value="UniProtKB-SubCell"/>
</dbReference>
<dbReference type="GO" id="GO:0055085">
    <property type="term" value="P:transmembrane transport"/>
    <property type="evidence" value="ECO:0007669"/>
    <property type="project" value="InterPro"/>
</dbReference>
<dbReference type="Gene3D" id="3.40.190.10">
    <property type="entry name" value="Periplasmic binding protein-like II"/>
    <property type="match status" value="2"/>
</dbReference>
<dbReference type="InterPro" id="IPR050490">
    <property type="entry name" value="Bact_solute-bd_prot1"/>
</dbReference>
<dbReference type="InterPro" id="IPR006059">
    <property type="entry name" value="SBP"/>
</dbReference>
<dbReference type="InterPro" id="IPR006061">
    <property type="entry name" value="SBP_1_CS"/>
</dbReference>
<dbReference type="PANTHER" id="PTHR43649">
    <property type="entry name" value="ARABINOSE-BINDING PROTEIN-RELATED"/>
    <property type="match status" value="1"/>
</dbReference>
<dbReference type="PANTHER" id="PTHR43649:SF33">
    <property type="entry name" value="POLYGALACTURONAN_RHAMNOGALACTURONAN-BINDING PROTEIN YTCQ"/>
    <property type="match status" value="1"/>
</dbReference>
<dbReference type="Pfam" id="PF01547">
    <property type="entry name" value="SBP_bac_1"/>
    <property type="match status" value="1"/>
</dbReference>
<dbReference type="SUPFAM" id="SSF53850">
    <property type="entry name" value="Periplasmic binding protein-like II"/>
    <property type="match status" value="1"/>
</dbReference>
<dbReference type="PROSITE" id="PS51257">
    <property type="entry name" value="PROKAR_LIPOPROTEIN"/>
    <property type="match status" value="1"/>
</dbReference>
<dbReference type="PROSITE" id="PS01037">
    <property type="entry name" value="SBP_BACTERIAL_1"/>
    <property type="match status" value="1"/>
</dbReference>